<name>MOAP1_HUMAN</name>
<dbReference type="EMBL" id="AF305550">
    <property type="protein sequence ID" value="AAG31786.1"/>
    <property type="molecule type" value="mRNA"/>
</dbReference>
<dbReference type="EMBL" id="AK024029">
    <property type="protein sequence ID" value="BAB14788.1"/>
    <property type="status" value="ALT_SEQ"/>
    <property type="molecule type" value="mRNA"/>
</dbReference>
<dbReference type="EMBL" id="AK315522">
    <property type="protein sequence ID" value="BAG37903.1"/>
    <property type="molecule type" value="mRNA"/>
</dbReference>
<dbReference type="EMBL" id="CH471061">
    <property type="protein sequence ID" value="EAW81516.1"/>
    <property type="molecule type" value="Genomic_DNA"/>
</dbReference>
<dbReference type="EMBL" id="BC015044">
    <property type="protein sequence ID" value="AAH15044.1"/>
    <property type="molecule type" value="mRNA"/>
</dbReference>
<dbReference type="CCDS" id="CCDS9908.1"/>
<dbReference type="RefSeq" id="NP_071434.2">
    <property type="nucleotide sequence ID" value="NM_022151.4"/>
</dbReference>
<dbReference type="PDB" id="7LGC">
    <property type="method" value="X-ray"/>
    <property type="resolution" value="1.85 A"/>
    <property type="chains" value="A/B=242-351"/>
</dbReference>
<dbReference type="PDBsum" id="7LGC"/>
<dbReference type="SMR" id="Q96BY2"/>
<dbReference type="BioGRID" id="122069">
    <property type="interactions" value="43"/>
</dbReference>
<dbReference type="DIP" id="DIP-49959N"/>
<dbReference type="FunCoup" id="Q96BY2">
    <property type="interactions" value="333"/>
</dbReference>
<dbReference type="IntAct" id="Q96BY2">
    <property type="interactions" value="36"/>
</dbReference>
<dbReference type="MINT" id="Q96BY2"/>
<dbReference type="STRING" id="9606.ENSP00000451594"/>
<dbReference type="iPTMnet" id="Q96BY2"/>
<dbReference type="PhosphoSitePlus" id="Q96BY2"/>
<dbReference type="BioMuta" id="MOAP1"/>
<dbReference type="DMDM" id="37999755"/>
<dbReference type="jPOST" id="Q96BY2"/>
<dbReference type="MassIVE" id="Q96BY2"/>
<dbReference type="PaxDb" id="9606-ENSP00000451594"/>
<dbReference type="PeptideAtlas" id="Q96BY2"/>
<dbReference type="ProteomicsDB" id="76126"/>
<dbReference type="Antibodypedia" id="22">
    <property type="antibodies" value="323 antibodies from 33 providers"/>
</dbReference>
<dbReference type="DNASU" id="64112"/>
<dbReference type="Ensembl" id="ENST00000298894.5">
    <property type="protein sequence ID" value="ENSP00000298894.4"/>
    <property type="gene ID" value="ENSG00000165943.5"/>
</dbReference>
<dbReference type="Ensembl" id="ENST00000556883.1">
    <property type="protein sequence ID" value="ENSP00000451594.1"/>
    <property type="gene ID" value="ENSG00000165943.5"/>
</dbReference>
<dbReference type="Ensembl" id="ENST00000616515.2">
    <property type="protein sequence ID" value="ENSP00000482284.1"/>
    <property type="gene ID" value="ENSG00000278268.2"/>
</dbReference>
<dbReference type="Ensembl" id="ENST00000627896.1">
    <property type="protein sequence ID" value="ENSP00000486260.1"/>
    <property type="gene ID" value="ENSG00000278268.2"/>
</dbReference>
<dbReference type="GeneID" id="64112"/>
<dbReference type="KEGG" id="hsa:64112"/>
<dbReference type="MANE-Select" id="ENST00000298894.5">
    <property type="protein sequence ID" value="ENSP00000298894.4"/>
    <property type="RefSeq nucleotide sequence ID" value="NM_022151.5"/>
    <property type="RefSeq protein sequence ID" value="NP_071434.2"/>
</dbReference>
<dbReference type="UCSC" id="uc001ybj.4">
    <property type="organism name" value="human"/>
</dbReference>
<dbReference type="AGR" id="HGNC:16658"/>
<dbReference type="CTD" id="64112"/>
<dbReference type="DisGeNET" id="64112"/>
<dbReference type="GeneCards" id="MOAP1"/>
<dbReference type="HGNC" id="HGNC:16658">
    <property type="gene designation" value="MOAP1"/>
</dbReference>
<dbReference type="HPA" id="ENSG00000165943">
    <property type="expression patterns" value="Tissue enhanced (brain)"/>
</dbReference>
<dbReference type="MIM" id="609485">
    <property type="type" value="gene"/>
</dbReference>
<dbReference type="neXtProt" id="NX_Q96BY2"/>
<dbReference type="OpenTargets" id="ENSG00000165943"/>
<dbReference type="PharmGKB" id="PA134908381"/>
<dbReference type="VEuPathDB" id="HostDB:ENSG00000165943"/>
<dbReference type="eggNOG" id="ENOG502SAVD">
    <property type="taxonomic scope" value="Eukaryota"/>
</dbReference>
<dbReference type="GeneTree" id="ENSGT01030000234522"/>
<dbReference type="HOGENOM" id="CLU_014694_0_0_1"/>
<dbReference type="InParanoid" id="Q96BY2"/>
<dbReference type="OMA" id="HAFRRTE"/>
<dbReference type="OrthoDB" id="115435at2759"/>
<dbReference type="PAN-GO" id="Q96BY2">
    <property type="GO annotations" value="1 GO annotation based on evolutionary models"/>
</dbReference>
<dbReference type="PhylomeDB" id="Q96BY2"/>
<dbReference type="TreeFam" id="TF335054"/>
<dbReference type="PathwayCommons" id="Q96BY2"/>
<dbReference type="SignaLink" id="Q96BY2"/>
<dbReference type="SIGNOR" id="Q96BY2"/>
<dbReference type="BioGRID-ORCS" id="64112">
    <property type="hits" value="15 hits in 1151 CRISPR screens"/>
</dbReference>
<dbReference type="CD-CODE" id="F17BA747">
    <property type="entry name" value="P62 cluster"/>
</dbReference>
<dbReference type="ChiTaRS" id="MOAP1">
    <property type="organism name" value="human"/>
</dbReference>
<dbReference type="GeneWiki" id="MOAP1"/>
<dbReference type="GenomeRNAi" id="64112"/>
<dbReference type="Pharos" id="Q96BY2">
    <property type="development level" value="Tbio"/>
</dbReference>
<dbReference type="PRO" id="PR:Q96BY2"/>
<dbReference type="Proteomes" id="UP000005640">
    <property type="component" value="Chromosome 14"/>
</dbReference>
<dbReference type="RNAct" id="Q96BY2">
    <property type="molecule type" value="protein"/>
</dbReference>
<dbReference type="Bgee" id="ENSG00000165943">
    <property type="expression patterns" value="Expressed in superior frontal gyrus and 105 other cell types or tissues"/>
</dbReference>
<dbReference type="GO" id="GO:0005737">
    <property type="term" value="C:cytoplasm"/>
    <property type="evidence" value="ECO:0000314"/>
    <property type="project" value="LIFEdb"/>
</dbReference>
<dbReference type="GO" id="GO:0005829">
    <property type="term" value="C:cytosol"/>
    <property type="evidence" value="ECO:0000314"/>
    <property type="project" value="BHF-UCL"/>
</dbReference>
<dbReference type="GO" id="GO:0005741">
    <property type="term" value="C:mitochondrial outer membrane"/>
    <property type="evidence" value="ECO:0000314"/>
    <property type="project" value="BHF-UCL"/>
</dbReference>
<dbReference type="GO" id="GO:0005739">
    <property type="term" value="C:mitochondrion"/>
    <property type="evidence" value="ECO:0000314"/>
    <property type="project" value="BHF-UCL"/>
</dbReference>
<dbReference type="GO" id="GO:0031625">
    <property type="term" value="F:ubiquitin protein ligase binding"/>
    <property type="evidence" value="ECO:0000353"/>
    <property type="project" value="BHF-UCL"/>
</dbReference>
<dbReference type="GO" id="GO:0097190">
    <property type="term" value="P:apoptotic signaling pathway"/>
    <property type="evidence" value="ECO:0000314"/>
    <property type="project" value="BHF-UCL"/>
</dbReference>
<dbReference type="GO" id="GO:0006914">
    <property type="term" value="P:autophagy"/>
    <property type="evidence" value="ECO:0007669"/>
    <property type="project" value="UniProtKB-KW"/>
</dbReference>
<dbReference type="GO" id="GO:0097192">
    <property type="term" value="P:extrinsic apoptotic signaling pathway in absence of ligand"/>
    <property type="evidence" value="ECO:0000315"/>
    <property type="project" value="BHF-UCL"/>
</dbReference>
<dbReference type="GO" id="GO:0008625">
    <property type="term" value="P:extrinsic apoptotic signaling pathway via death domain receptors"/>
    <property type="evidence" value="ECO:0000315"/>
    <property type="project" value="BHF-UCL"/>
</dbReference>
<dbReference type="GO" id="GO:0008630">
    <property type="term" value="P:intrinsic apoptotic signaling pathway in response to DNA damage"/>
    <property type="evidence" value="ECO:0000315"/>
    <property type="project" value="BHF-UCL"/>
</dbReference>
<dbReference type="GO" id="GO:0043065">
    <property type="term" value="P:positive regulation of apoptotic process"/>
    <property type="evidence" value="ECO:0000315"/>
    <property type="project" value="UniProtKB"/>
</dbReference>
<dbReference type="GO" id="GO:2000786">
    <property type="term" value="P:positive regulation of autophagosome assembly"/>
    <property type="evidence" value="ECO:0000315"/>
    <property type="project" value="UniProtKB"/>
</dbReference>
<dbReference type="GO" id="GO:0090200">
    <property type="term" value="P:positive regulation of release of cytochrome c from mitochondria"/>
    <property type="evidence" value="ECO:0000315"/>
    <property type="project" value="BHF-UCL"/>
</dbReference>
<dbReference type="GO" id="GO:0051204">
    <property type="term" value="P:protein insertion into mitochondrial membrane"/>
    <property type="evidence" value="ECO:0000315"/>
    <property type="project" value="BHF-UCL"/>
</dbReference>
<dbReference type="GO" id="GO:0042981">
    <property type="term" value="P:regulation of apoptotic process"/>
    <property type="evidence" value="ECO:0000318"/>
    <property type="project" value="GO_Central"/>
</dbReference>
<dbReference type="InterPro" id="IPR026523">
    <property type="entry name" value="PNMA"/>
</dbReference>
<dbReference type="InterPro" id="IPR048270">
    <property type="entry name" value="PNMA_C"/>
</dbReference>
<dbReference type="InterPro" id="IPR048271">
    <property type="entry name" value="PNMA_N"/>
</dbReference>
<dbReference type="PANTHER" id="PTHR23095:SF14">
    <property type="entry name" value="MODULATOR OF APOPTOSIS 1"/>
    <property type="match status" value="1"/>
</dbReference>
<dbReference type="PANTHER" id="PTHR23095">
    <property type="entry name" value="PARANEOPLASTIC ANTIGEN"/>
    <property type="match status" value="1"/>
</dbReference>
<dbReference type="Pfam" id="PF14893">
    <property type="entry name" value="PNMA"/>
    <property type="match status" value="1"/>
</dbReference>
<dbReference type="Pfam" id="PF20846">
    <property type="entry name" value="PNMA_N"/>
    <property type="match status" value="1"/>
</dbReference>
<feature type="chain" id="PRO_0000155205" description="Modulator of apoptosis 1">
    <location>
        <begin position="1"/>
        <end position="351"/>
    </location>
</feature>
<feature type="region of interest" description="BH3-like" evidence="11">
    <location>
        <begin position="120"/>
        <end position="127"/>
    </location>
</feature>
<feature type="region of interest" description="RASSF1-binding" evidence="3">
    <location>
        <begin position="202"/>
        <end position="205"/>
    </location>
</feature>
<feature type="short sequence motif" description="LIR" evidence="9">
    <location>
        <begin position="49"/>
        <end position="52"/>
    </location>
</feature>
<feature type="mutagenesis site" description="Abolished interaction with ATG8 proteins MAP1LC3A, MAP1LC3B and MAP1LC3C." evidence="9">
    <original>YRLL</original>
    <variation>ARLA</variation>
    <location>
        <begin position="49"/>
        <end position="52"/>
    </location>
</feature>
<feature type="mutagenesis site" description="Does not affect interaction with ATG8 proteins MAP1LC3A, MAP1LC3B and MAP1LC3C." evidence="9">
    <original>WRVI</original>
    <variation>ARVA</variation>
    <location>
        <begin position="89"/>
        <end position="92"/>
    </location>
</feature>
<feature type="mutagenesis site" description="Abrogates interaction with BAX, resulting in a nonapoptotic protein." evidence="2">
    <location>
        <begin position="120"/>
        <end position="127"/>
    </location>
</feature>
<feature type="mutagenesis site" description="Weakened interaction with BAX, resulting in a nonapoptotic protein." evidence="2">
    <original>L</original>
    <variation>E</variation>
    <location>
        <position position="120"/>
    </location>
</feature>
<feature type="mutagenesis site" description="Abrogates interaction with BAX, resulting in a nonapoptotic protein." evidence="2">
    <original>GHE</original>
    <variation>VLA</variation>
    <location>
        <begin position="125"/>
        <end position="127"/>
    </location>
</feature>
<feature type="mutagenesis site" description="No effect on RASSF1-binding." evidence="3">
    <original>KYKKLR</original>
    <variation>AYAALA</variation>
    <location>
        <begin position="161"/>
        <end position="166"/>
    </location>
</feature>
<feature type="mutagenesis site" description="Does not affect interaction with ATG8 proteins MAP1LC3A, MAP1LC3B and MAP1LC3C." evidence="9">
    <original>YKKL</original>
    <variation>AKKA</variation>
    <location>
        <begin position="162"/>
        <end position="165"/>
    </location>
</feature>
<feature type="mutagenesis site" description="No effect on RASSF1-binding; interacts with BAX in the absence of RASSF1.">
    <original>EEE</original>
    <variation>AAA</variation>
    <location>
        <begin position="178"/>
        <end position="180"/>
    </location>
</feature>
<feature type="mutagenesis site" description="Loss of RASSF1-binding; interacts with BAX in the absence of RASSF1." evidence="3">
    <original>KRRR</original>
    <variation>AAAA</variation>
    <location>
        <begin position="202"/>
        <end position="205"/>
    </location>
</feature>
<feature type="sequence conflict" description="In Ref. 2; BAB14788." evidence="13" ref="2">
    <original>T</original>
    <variation>A</variation>
    <location>
        <position position="244"/>
    </location>
</feature>
<feature type="sequence conflict" description="In Ref. 2; BAB14788." evidence="13" ref="2">
    <original>Y</original>
    <variation>H</variation>
    <location>
        <position position="258"/>
    </location>
</feature>
<feature type="sequence conflict" description="In Ref. 1; AAG31786." evidence="13" ref="1">
    <original>Q</original>
    <variation>H</variation>
    <location>
        <position position="259"/>
    </location>
</feature>
<feature type="helix" evidence="15">
    <location>
        <begin position="247"/>
        <end position="255"/>
    </location>
</feature>
<feature type="helix" evidence="15">
    <location>
        <begin position="265"/>
        <end position="281"/>
    </location>
</feature>
<feature type="helix" evidence="15">
    <location>
        <begin position="287"/>
        <end position="289"/>
    </location>
</feature>
<feature type="helix" evidence="15">
    <location>
        <begin position="290"/>
        <end position="301"/>
    </location>
</feature>
<feature type="helix" evidence="15">
    <location>
        <begin position="307"/>
        <end position="310"/>
    </location>
</feature>
<feature type="helix" evidence="15">
    <location>
        <begin position="322"/>
        <end position="346"/>
    </location>
</feature>
<proteinExistence type="evidence at protein level"/>
<evidence type="ECO:0000250" key="1">
    <source>
        <dbReference type="UniProtKB" id="Q9ERH6"/>
    </source>
</evidence>
<evidence type="ECO:0000269" key="2">
    <source>
    </source>
</evidence>
<evidence type="ECO:0000269" key="3">
    <source>
    </source>
</evidence>
<evidence type="ECO:0000269" key="4">
    <source>
    </source>
</evidence>
<evidence type="ECO:0000269" key="5">
    <source>
    </source>
</evidence>
<evidence type="ECO:0000269" key="6">
    <source>
    </source>
</evidence>
<evidence type="ECO:0000269" key="7">
    <source>
    </source>
</evidence>
<evidence type="ECO:0000269" key="8">
    <source>
    </source>
</evidence>
<evidence type="ECO:0000269" key="9">
    <source>
    </source>
</evidence>
<evidence type="ECO:0000269" key="10">
    <source>
    </source>
</evidence>
<evidence type="ECO:0000303" key="11">
    <source>
    </source>
</evidence>
<evidence type="ECO:0000303" key="12">
    <source>
    </source>
</evidence>
<evidence type="ECO:0000305" key="13"/>
<evidence type="ECO:0000312" key="14">
    <source>
        <dbReference type="HGNC" id="HGNC:16658"/>
    </source>
</evidence>
<evidence type="ECO:0007829" key="15">
    <source>
        <dbReference type="PDB" id="7LGC"/>
    </source>
</evidence>
<accession>Q96BY2</accession>
<accession>B2RDF6</accession>
<accession>Q9H833</accession>
<accession>Q9HAS1</accession>
<gene>
    <name evidence="12 14" type="primary">MOAP1</name>
    <name evidence="12" type="synonym">PNMA4</name>
</gene>
<comment type="function">
    <text evidence="1 2 3 4 8 9">Retrotransposon-derived protein that forms virion-like capsids (By similarity). Acts as an effector of BAX during apoptosis: enriched at outer mitochondria membrane and associates with BAX upon induction of apoptosis, facilitating BAX-dependent mitochondrial outer membrane permeabilization and apoptosis (PubMed:11060313, PubMed:16199525). Required for death receptor-dependent apoptosis (PubMed:11060313). When associated with RASSF1, promotes BAX conformational change and translocation to mitochondrial membranes in response to TNF and TNFSF10 stimulation (PubMed:15949439). Also promotes autophagy: promotes phagophore closure via association with ATG8 proteins (PubMed:33783314). Acts as an inhibitor of the NFE2L2/NRF2 pathway via interaction with SQSTM1: interaction promotes dissociation of SQSTM1 inclusion bodies that sequester KEAP1, relieving inactivation of the BCR(KEAP1) complex (PubMed:33393215).</text>
</comment>
<comment type="subunit">
    <text evidence="1 2 3 4 5 8 9">Homodimer (PubMed:15949439). Under normal circumstances, held in an inactive conformation by an intramolecular interaction (PubMed:15949439). Interacts with BAX (PubMed:11060313, PubMed:16199525). Binding to RASSF1 isoform A (RASSF1A) relieves this inhibitory interaction and allows further binding to BAX (PubMed:15949439). Also binds to BCL2 and BCLX (PubMed:11060313). Recruited to the TNFRSF1A and TNFRSF10A complexes in response to their respective cognate ligand, after internalization (PubMed:15949439). Interacts with TRIM39 (PubMed:19100260). Interacts with RASSF6 (By similarity). Interacts with ATG8 proteins MAP1LC3A, MAP1LC3B and MAP1LC3C (PubMed:33783314). Does not interact with ATG8 proteins GABARAPL1, GABARAPL2 and GABARAP (PubMed:33783314). Interacts with SQSTM1; promoting dissociation of SQSTM1 inclusion bodies that sequester KEAP1 (PubMed:33393215).</text>
</comment>
<comment type="interaction">
    <interactant intactId="EBI-739825">
        <id>Q96BY2</id>
    </interactant>
    <interactant intactId="EBI-351018">
        <id>Q13557</id>
        <label>CAMK2D</label>
    </interactant>
    <organismsDiffer>false</organismsDiffer>
    <experiments>3</experiments>
</comment>
<comment type="interaction">
    <interactant intactId="EBI-739825">
        <id>Q96BY2</id>
    </interactant>
    <interactant intactId="EBI-10253976">
        <id>Q6PJG3</id>
        <label>LATS1</label>
    </interactant>
    <organismsDiffer>false</organismsDiffer>
    <experiments>3</experiments>
</comment>
<comment type="interaction">
    <interactant intactId="EBI-739825">
        <id>Q96BY2</id>
    </interactant>
    <interactant intactId="EBI-10182361">
        <id>Q9NS73-5</id>
        <label>MBIP</label>
    </interactant>
    <organismsDiffer>false</organismsDiffer>
    <experiments>3</experiments>
</comment>
<comment type="interaction">
    <interactant intactId="EBI-739825">
        <id>Q96BY2</id>
    </interactant>
    <interactant intactId="EBI-16439278">
        <id>Q6FHY5</id>
        <label>MEOX2</label>
    </interactant>
    <organismsDiffer>false</organismsDiffer>
    <experiments>3</experiments>
</comment>
<comment type="interaction">
    <interactant intactId="EBI-739825">
        <id>Q96BY2</id>
    </interactant>
    <interactant intactId="EBI-10171633">
        <id>Q96PV4</id>
        <label>PNMA5</label>
    </interactant>
    <organismsDiffer>false</organismsDiffer>
    <experiments>3</experiments>
</comment>
<comment type="interaction">
    <interactant intactId="EBI-739825">
        <id>Q96BY2</id>
    </interactant>
    <interactant intactId="EBI-2561661">
        <id>Q969Q6</id>
        <label>PPP2R3C</label>
    </interactant>
    <organismsDiffer>false</organismsDiffer>
    <experiments>3</experiments>
</comment>
<comment type="interaction">
    <interactant intactId="EBI-739825">
        <id>Q96BY2</id>
    </interactant>
    <interactant intactId="EBI-6257312">
        <id>Q9BVN2</id>
        <label>RUSC1</label>
    </interactant>
    <organismsDiffer>false</organismsDiffer>
    <experiments>3</experiments>
</comment>
<comment type="interaction">
    <interactant intactId="EBI-739825">
        <id>Q96BY2</id>
    </interactant>
    <interactant intactId="EBI-1765605">
        <id>Q96FV9</id>
        <label>THOC1</label>
    </interactant>
    <organismsDiffer>false</organismsDiffer>
    <experiments>7</experiments>
</comment>
<comment type="interaction">
    <interactant intactId="EBI-739825">
        <id>Q96BY2</id>
    </interactant>
    <interactant intactId="EBI-947187">
        <id>Q9UHD9</id>
        <label>UBQLN2</label>
    </interactant>
    <organismsDiffer>false</organismsDiffer>
    <experiments>3</experiments>
</comment>
<comment type="interaction">
    <interactant intactId="EBI-739825">
        <id>Q96BY2</id>
    </interactant>
    <interactant intactId="EBI-12030590">
        <id>Q9H0C1</id>
        <label>ZMYND12</label>
    </interactant>
    <organismsDiffer>false</organismsDiffer>
    <experiments>5</experiments>
</comment>
<comment type="subcellular location">
    <subcellularLocation>
        <location evidence="5">Cytoplasm</location>
        <location evidence="5">Cytosol</location>
    </subcellularLocation>
    <subcellularLocation>
        <location evidence="4">Mitochondrion outer membrane</location>
    </subcellularLocation>
    <subcellularLocation>
        <location evidence="1">Extracellular vesicle membrane</location>
    </subcellularLocation>
    <text evidence="1">Forms virion-like extracellular vesicles that are released from cells.</text>
</comment>
<comment type="tissue specificity">
    <text evidence="6">Widely expressed, with high levels in heart and brain.</text>
</comment>
<comment type="domain">
    <text evidence="10">The protein is evolutionarily related to retrotransposon Gag proteins: it contains the capsid (CA)subdomain of gag.</text>
</comment>
<comment type="domain">
    <text evidence="2">The BH3-like domain is required for association with BAX and for mediating apoptosis (PubMed:11060313). The three BH domains (BH1, BH2, and BH3) of BAX are all required for mediating protein-protein interaction (PubMed:11060313).</text>
</comment>
<comment type="domain">
    <text evidence="9">The LIR motif (LC3-interacting region) is required for the interaction with the ATG8 family proteins MAP1LC3A, MAP1LC3B and MAP1LC3C.</text>
</comment>
<comment type="PTM">
    <text evidence="7">Ubiquitinated and degraded during mitotic exit by APC/C-Cdh1, this modification is inhibited by TRIM39.</text>
</comment>
<comment type="similarity">
    <text evidence="13">Belongs to the PNMA family.</text>
</comment>
<comment type="sequence caution" evidence="13">
    <conflict type="frameshift">
        <sequence resource="EMBL-CDS" id="BAB14788"/>
    </conflict>
</comment>
<reference key="1">
    <citation type="journal article" date="2001" name="J. Biol. Chem.">
        <title>MAP-1, a novel proapoptotic protein containing a BH3-like motif that associates with Bax through its Bcl-2 homology domains.</title>
        <authorList>
            <person name="Tan K.O."/>
            <person name="Tan K.M.L."/>
            <person name="Chan S.-L."/>
            <person name="Yee K.S.Y."/>
            <person name="Bevort M."/>
            <person name="Ang K.C."/>
            <person name="Yu V.C."/>
        </authorList>
    </citation>
    <scope>NUCLEOTIDE SEQUENCE [MRNA]</scope>
    <scope>FUNCTION</scope>
    <scope>DOMAIN</scope>
    <scope>INTERACTION WITH BAX</scope>
    <scope>MUTAGENESIS OF LEU-120; 120-LEU--ARG-127 AND 125-GLY--GLU-127</scope>
    <source>
        <tissue>Cerebellum</tissue>
    </source>
</reference>
<reference key="2">
    <citation type="journal article" date="2004" name="Nat. Genet.">
        <title>Complete sequencing and characterization of 21,243 full-length human cDNAs.</title>
        <authorList>
            <person name="Ota T."/>
            <person name="Suzuki Y."/>
            <person name="Nishikawa T."/>
            <person name="Otsuki T."/>
            <person name="Sugiyama T."/>
            <person name="Irie R."/>
            <person name="Wakamatsu A."/>
            <person name="Hayashi K."/>
            <person name="Sato H."/>
            <person name="Nagai K."/>
            <person name="Kimura K."/>
            <person name="Makita H."/>
            <person name="Sekine M."/>
            <person name="Obayashi M."/>
            <person name="Nishi T."/>
            <person name="Shibahara T."/>
            <person name="Tanaka T."/>
            <person name="Ishii S."/>
            <person name="Yamamoto J."/>
            <person name="Saito K."/>
            <person name="Kawai Y."/>
            <person name="Isono Y."/>
            <person name="Nakamura Y."/>
            <person name="Nagahari K."/>
            <person name="Murakami K."/>
            <person name="Yasuda T."/>
            <person name="Iwayanagi T."/>
            <person name="Wagatsuma M."/>
            <person name="Shiratori A."/>
            <person name="Sudo H."/>
            <person name="Hosoiri T."/>
            <person name="Kaku Y."/>
            <person name="Kodaira H."/>
            <person name="Kondo H."/>
            <person name="Sugawara M."/>
            <person name="Takahashi M."/>
            <person name="Kanda K."/>
            <person name="Yokoi T."/>
            <person name="Furuya T."/>
            <person name="Kikkawa E."/>
            <person name="Omura Y."/>
            <person name="Abe K."/>
            <person name="Kamihara K."/>
            <person name="Katsuta N."/>
            <person name="Sato K."/>
            <person name="Tanikawa M."/>
            <person name="Yamazaki M."/>
            <person name="Ninomiya K."/>
            <person name="Ishibashi T."/>
            <person name="Yamashita H."/>
            <person name="Murakawa K."/>
            <person name="Fujimori K."/>
            <person name="Tanai H."/>
            <person name="Kimata M."/>
            <person name="Watanabe M."/>
            <person name="Hiraoka S."/>
            <person name="Chiba Y."/>
            <person name="Ishida S."/>
            <person name="Ono Y."/>
            <person name="Takiguchi S."/>
            <person name="Watanabe S."/>
            <person name="Yosida M."/>
            <person name="Hotuta T."/>
            <person name="Kusano J."/>
            <person name="Kanehori K."/>
            <person name="Takahashi-Fujii A."/>
            <person name="Hara H."/>
            <person name="Tanase T.-O."/>
            <person name="Nomura Y."/>
            <person name="Togiya S."/>
            <person name="Komai F."/>
            <person name="Hara R."/>
            <person name="Takeuchi K."/>
            <person name="Arita M."/>
            <person name="Imose N."/>
            <person name="Musashino K."/>
            <person name="Yuuki H."/>
            <person name="Oshima A."/>
            <person name="Sasaki N."/>
            <person name="Aotsuka S."/>
            <person name="Yoshikawa Y."/>
            <person name="Matsunawa H."/>
            <person name="Ichihara T."/>
            <person name="Shiohata N."/>
            <person name="Sano S."/>
            <person name="Moriya S."/>
            <person name="Momiyama H."/>
            <person name="Satoh N."/>
            <person name="Takami S."/>
            <person name="Terashima Y."/>
            <person name="Suzuki O."/>
            <person name="Nakagawa S."/>
            <person name="Senoh A."/>
            <person name="Mizoguchi H."/>
            <person name="Goto Y."/>
            <person name="Shimizu F."/>
            <person name="Wakebe H."/>
            <person name="Hishigaki H."/>
            <person name="Watanabe T."/>
            <person name="Sugiyama A."/>
            <person name="Takemoto M."/>
            <person name="Kawakami B."/>
            <person name="Yamazaki M."/>
            <person name="Watanabe K."/>
            <person name="Kumagai A."/>
            <person name="Itakura S."/>
            <person name="Fukuzumi Y."/>
            <person name="Fujimori Y."/>
            <person name="Komiyama M."/>
            <person name="Tashiro H."/>
            <person name="Tanigami A."/>
            <person name="Fujiwara T."/>
            <person name="Ono T."/>
            <person name="Yamada K."/>
            <person name="Fujii Y."/>
            <person name="Ozaki K."/>
            <person name="Hirao M."/>
            <person name="Ohmori Y."/>
            <person name="Kawabata A."/>
            <person name="Hikiji T."/>
            <person name="Kobatake N."/>
            <person name="Inagaki H."/>
            <person name="Ikema Y."/>
            <person name="Okamoto S."/>
            <person name="Okitani R."/>
            <person name="Kawakami T."/>
            <person name="Noguchi S."/>
            <person name="Itoh T."/>
            <person name="Shigeta K."/>
            <person name="Senba T."/>
            <person name="Matsumura K."/>
            <person name="Nakajima Y."/>
            <person name="Mizuno T."/>
            <person name="Morinaga M."/>
            <person name="Sasaki M."/>
            <person name="Togashi T."/>
            <person name="Oyama M."/>
            <person name="Hata H."/>
            <person name="Watanabe M."/>
            <person name="Komatsu T."/>
            <person name="Mizushima-Sugano J."/>
            <person name="Satoh T."/>
            <person name="Shirai Y."/>
            <person name="Takahashi Y."/>
            <person name="Nakagawa K."/>
            <person name="Okumura K."/>
            <person name="Nagase T."/>
            <person name="Nomura N."/>
            <person name="Kikuchi H."/>
            <person name="Masuho Y."/>
            <person name="Yamashita R."/>
            <person name="Nakai K."/>
            <person name="Yada T."/>
            <person name="Nakamura Y."/>
            <person name="Ohara O."/>
            <person name="Isogai T."/>
            <person name="Sugano S."/>
        </authorList>
    </citation>
    <scope>NUCLEOTIDE SEQUENCE [LARGE SCALE MRNA]</scope>
    <source>
        <tissue>Retinoblastoma</tissue>
        <tissue>Tongue</tissue>
    </source>
</reference>
<reference key="3">
    <citation type="submission" date="2005-07" db="EMBL/GenBank/DDBJ databases">
        <authorList>
            <person name="Mural R.J."/>
            <person name="Istrail S."/>
            <person name="Sutton G.G."/>
            <person name="Florea L."/>
            <person name="Halpern A.L."/>
            <person name="Mobarry C.M."/>
            <person name="Lippert R."/>
            <person name="Walenz B."/>
            <person name="Shatkay H."/>
            <person name="Dew I."/>
            <person name="Miller J.R."/>
            <person name="Flanigan M.J."/>
            <person name="Edwards N.J."/>
            <person name="Bolanos R."/>
            <person name="Fasulo D."/>
            <person name="Halldorsson B.V."/>
            <person name="Hannenhalli S."/>
            <person name="Turner R."/>
            <person name="Yooseph S."/>
            <person name="Lu F."/>
            <person name="Nusskern D.R."/>
            <person name="Shue B.C."/>
            <person name="Zheng X.H."/>
            <person name="Zhong F."/>
            <person name="Delcher A.L."/>
            <person name="Huson D.H."/>
            <person name="Kravitz S.A."/>
            <person name="Mouchard L."/>
            <person name="Reinert K."/>
            <person name="Remington K.A."/>
            <person name="Clark A.G."/>
            <person name="Waterman M.S."/>
            <person name="Eichler E.E."/>
            <person name="Adams M.D."/>
            <person name="Hunkapiller M.W."/>
            <person name="Myers E.W."/>
            <person name="Venter J.C."/>
        </authorList>
    </citation>
    <scope>NUCLEOTIDE SEQUENCE [LARGE SCALE GENOMIC DNA]</scope>
</reference>
<reference key="4">
    <citation type="journal article" date="2004" name="Genome Res.">
        <title>The status, quality, and expansion of the NIH full-length cDNA project: the Mammalian Gene Collection (MGC).</title>
        <authorList>
            <consortium name="The MGC Project Team"/>
        </authorList>
    </citation>
    <scope>NUCLEOTIDE SEQUENCE [LARGE SCALE MRNA]</scope>
    <source>
        <tissue>Skin</tissue>
    </source>
</reference>
<reference key="5">
    <citation type="journal article" date="2005" name="Mol. Cell">
        <title>The tumor suppressor RASSF1A and MAP-1 link death receptor signaling to Bax conformational change and cell death.</title>
        <authorList>
            <person name="Baksh S."/>
            <person name="Tommasi S."/>
            <person name="Fenton S."/>
            <person name="Yu V.C."/>
            <person name="Martins L.M."/>
            <person name="Pfeifer G.P."/>
            <person name="Latif F."/>
            <person name="Downward J."/>
            <person name="Neel B.G."/>
        </authorList>
    </citation>
    <scope>INTERACTION WITH RASSF1</scope>
    <scope>INTRAMOLECULAR INTERACTION</scope>
    <scope>MUTAGENESIS OF 161-LYS--ARG-166; 178-GLU--ALA-181 AND 202-LYS--ARG-205</scope>
    <scope>FUNCTION</scope>
</reference>
<reference key="6">
    <citation type="journal article" date="2005" name="Proc. Natl. Acad. Sci. U.S.A.">
        <title>MAP-1 is a mitochondrial effector of Bax.</title>
        <authorList>
            <person name="Tan K.O."/>
            <person name="Fu N.Y."/>
            <person name="Sukumaran S.K."/>
            <person name="Chan S.L."/>
            <person name="Kang J.H."/>
            <person name="Poon K.L."/>
            <person name="Chen B.S."/>
            <person name="Yu V.C."/>
        </authorList>
    </citation>
    <scope>FUNCTION</scope>
    <scope>SUBCELLULAR LOCATION</scope>
    <scope>INTERACTION WITH BAX</scope>
</reference>
<reference key="7">
    <citation type="journal article" date="2009" name="Cereb. Cortex">
        <title>Paraneoplastic antigen-like 5 gene (PNMA5) is preferentially expressed in the association areas in a primate specific manner.</title>
        <authorList>
            <person name="Takaji M."/>
            <person name="Komatsu Y."/>
            <person name="Watakabe A."/>
            <person name="Hashikawa T."/>
            <person name="Yamamori T."/>
        </authorList>
    </citation>
    <scope>TISSUE SPECIFICITY</scope>
</reference>
<reference key="8">
    <citation type="journal article" date="2009" name="Exp. Cell Res.">
        <title>TRIM39 is a MOAP-1-binding protein that stabilizes MOAP-1 through inhibition of its poly-ubiquitination process.</title>
        <authorList>
            <person name="Lee S.S."/>
            <person name="Fu N.Y."/>
            <person name="Sukumaran S.K."/>
            <person name="Wan K.F."/>
            <person name="Wan Q."/>
            <person name="Yu V.C."/>
        </authorList>
    </citation>
    <scope>INTERACTION WITH TRIM39</scope>
</reference>
<reference key="9">
    <citation type="journal article" date="2012" name="J. Cell Biol.">
        <title>The Trim39 ubiquitin ligase inhibits APC/CCdh1-mediated degradation of the Bax activator MOAP-1.</title>
        <authorList>
            <person name="Huang N.J."/>
            <person name="Zhang L."/>
            <person name="Tang W."/>
            <person name="Chen C."/>
            <person name="Yang C.S."/>
            <person name="Kornbluth S."/>
        </authorList>
    </citation>
    <scope>UBIQUITINATION BY APC/C-CDH1</scope>
</reference>
<reference key="10">
    <citation type="journal article" date="2021" name="Autophagy">
        <title>The BAX-binding protein MOAP1 associates with LC3 and promotes closure of the phagophore.</title>
        <authorList>
            <person name="Chang H.C."/>
            <person name="Tao R.N."/>
            <person name="Tan C.T."/>
            <person name="Wu Y.J."/>
            <person name="Bay B.H."/>
            <person name="Yu V.C."/>
        </authorList>
    </citation>
    <scope>FUNCTION</scope>
    <scope>INTERACTION WITH MAP1LC3A; MAP1LC3B AND MAP1LC3C</scope>
    <scope>DOMAIN</scope>
    <scope>MUTAGENESIS OF 49-TYR--LEU-52; 89-TRP--ILE-92 AND 162-TYR--LEU-165</scope>
</reference>
<reference key="11">
    <citation type="journal article" date="2021" name="EMBO Rep.">
        <title>MOAP-1-mediated dissociation of p62/SQSTM1 bodies releases Keap1 and suppresses Nrf2 signaling.</title>
        <authorList>
            <person name="Tan C.T."/>
            <person name="Chang H.C."/>
            <person name="Zhou Q."/>
            <person name="Yu C."/>
            <person name="Fu N.Y."/>
            <person name="Sabapathy K."/>
            <person name="Yu V.C."/>
        </authorList>
    </citation>
    <scope>FUNCTION</scope>
    <scope>INTERACTION WITH SQSTM1</scope>
</reference>
<reference key="12">
    <citation type="journal article" date="2022" name="Proteins">
        <title>Structural evidence that MOAP1 and PEG10 are derived from retrovirus/retrotransposon Gag proteins.</title>
        <authorList>
            <person name="Zurowska K."/>
            <person name="Alam A."/>
            <person name="Ganser-Pornillos B.K."/>
            <person name="Pornillos O."/>
        </authorList>
    </citation>
    <scope>X-RAY CRYSTALLOGRAPHY (1.85 ANGSTROMS) OF 246-351</scope>
    <scope>DOMAIN</scope>
</reference>
<protein>
    <recommendedName>
        <fullName evidence="11">Modulator of apoptosis 1</fullName>
        <shortName evidence="11">MAP-1</shortName>
        <shortName evidence="11">MAP1</shortName>
    </recommendedName>
    <alternativeName>
        <fullName evidence="12">Paraneoplastic antigen Ma4</fullName>
    </alternativeName>
</protein>
<sequence length="351" mass="39513">MTLRLLEDWCRGMDMNPRKALLIAGISQSCSVAEIEEALQAGLAPLGEYRLLGRMFRRDENRKVALVGLTAETSHALVPKEIPGKGGIWRVIFKPPDPDNTFLSRLNEFLAGEGMTVGELSRALGHENGSLDPEQGMIPEMWAPMLAQALEALQPALQCLKYKKLRVFSGRESPEPGEEEFGRWMFHTTQMIKAWQVPDVEKRRRLLESLRGPALDVIRVLKINNPLITVDECLQALEEVFGVTDNPRELQVKYLTTYQKDEEKLSAYVLRLEPLLQKLVQRGAIERDAVNQARLDQVIAGAVHKTIRRELNLPEDGPAPGFLQLLVLIKDYEAAEEEEALLQAILEGNFT</sequence>
<organism>
    <name type="scientific">Homo sapiens</name>
    <name type="common">Human</name>
    <dbReference type="NCBI Taxonomy" id="9606"/>
    <lineage>
        <taxon>Eukaryota</taxon>
        <taxon>Metazoa</taxon>
        <taxon>Chordata</taxon>
        <taxon>Craniata</taxon>
        <taxon>Vertebrata</taxon>
        <taxon>Euteleostomi</taxon>
        <taxon>Mammalia</taxon>
        <taxon>Eutheria</taxon>
        <taxon>Euarchontoglires</taxon>
        <taxon>Primates</taxon>
        <taxon>Haplorrhini</taxon>
        <taxon>Catarrhini</taxon>
        <taxon>Hominidae</taxon>
        <taxon>Homo</taxon>
    </lineage>
</organism>
<keyword id="KW-0002">3D-structure</keyword>
<keyword id="KW-0053">Apoptosis</keyword>
<keyword id="KW-0072">Autophagy</keyword>
<keyword id="KW-0963">Cytoplasm</keyword>
<keyword id="KW-0472">Membrane</keyword>
<keyword id="KW-0496">Mitochondrion</keyword>
<keyword id="KW-1000">Mitochondrion outer membrane</keyword>
<keyword id="KW-1267">Proteomics identification</keyword>
<keyword id="KW-1185">Reference proteome</keyword>
<keyword id="KW-0832">Ubl conjugation</keyword>